<name>YKOF_BACSU</name>
<feature type="chain" id="PRO_0000288884" description="Putative HMP/thiamine-binding protein YkoF">
    <location>
        <begin position="1"/>
        <end position="200"/>
    </location>
</feature>
<feature type="binding site" evidence="2">
    <location>
        <position position="17"/>
    </location>
    <ligand>
        <name>thiamine</name>
        <dbReference type="ChEBI" id="CHEBI:18385"/>
    </ligand>
</feature>
<feature type="binding site" evidence="2">
    <location>
        <position position="49"/>
    </location>
    <ligand>
        <name>thiamine</name>
        <dbReference type="ChEBI" id="CHEBI:18385"/>
    </ligand>
</feature>
<feature type="strand" evidence="6">
    <location>
        <begin position="11"/>
        <end position="19"/>
    </location>
</feature>
<feature type="helix" evidence="6">
    <location>
        <begin position="24"/>
        <end position="34"/>
    </location>
</feature>
<feature type="strand" evidence="6">
    <location>
        <begin position="40"/>
        <end position="44"/>
    </location>
</feature>
<feature type="strand" evidence="6">
    <location>
        <begin position="49"/>
        <end position="53"/>
    </location>
</feature>
<feature type="helix" evidence="6">
    <location>
        <begin position="55"/>
        <end position="70"/>
    </location>
</feature>
<feature type="strand" evidence="6">
    <location>
        <begin position="76"/>
        <end position="84"/>
    </location>
</feature>
<feature type="turn" evidence="6">
    <location>
        <begin position="103"/>
        <end position="110"/>
    </location>
</feature>
<feature type="strand" evidence="6">
    <location>
        <begin position="117"/>
        <end position="123"/>
    </location>
</feature>
<feature type="helix" evidence="6">
    <location>
        <begin position="129"/>
        <end position="142"/>
    </location>
</feature>
<feature type="strand" evidence="6">
    <location>
        <begin position="146"/>
        <end position="150"/>
    </location>
</feature>
<feature type="strand" evidence="6">
    <location>
        <begin position="153"/>
        <end position="156"/>
    </location>
</feature>
<feature type="helix" evidence="6">
    <location>
        <begin position="160"/>
        <end position="177"/>
    </location>
</feature>
<feature type="strand" evidence="6">
    <location>
        <begin position="179"/>
        <end position="190"/>
    </location>
</feature>
<comment type="function">
    <text evidence="1 3">Part of the ABC transporter complex YkoCDEF that could transport hydroxymethylpyrimidine (HMP) and/or thiamine. Could also transport other HMP-containing products. Binds thiamine via its HMP moiety.</text>
</comment>
<comment type="subunit">
    <text evidence="4 5">Homodimer in vitro. In vivo, may be a part of an ABC transporter complex which is composed of two ATP-binding proteins (YkoD), two transmembrane proteins (YkoC and YkoE) and a solute-binding protein (YkoF) (Probable).</text>
</comment>
<protein>
    <recommendedName>
        <fullName>Putative HMP/thiamine-binding protein YkoF</fullName>
    </recommendedName>
</protein>
<dbReference type="EMBL" id="AJ002571">
    <property type="protein sequence ID" value="CAA05603.1"/>
    <property type="molecule type" value="Genomic_DNA"/>
</dbReference>
<dbReference type="EMBL" id="AL009126">
    <property type="protein sequence ID" value="CAB13181.1"/>
    <property type="molecule type" value="Genomic_DNA"/>
</dbReference>
<dbReference type="PIR" id="B69859">
    <property type="entry name" value="B69859"/>
</dbReference>
<dbReference type="RefSeq" id="WP_003244962.1">
    <property type="nucleotide sequence ID" value="NZ_OZ025638.1"/>
</dbReference>
<dbReference type="PDB" id="1S7H">
    <property type="method" value="X-ray"/>
    <property type="resolution" value="2.20 A"/>
    <property type="chains" value="A/B/C/D=1-200"/>
</dbReference>
<dbReference type="PDB" id="1S99">
    <property type="method" value="X-ray"/>
    <property type="resolution" value="1.65 A"/>
    <property type="chains" value="A/B=1-200"/>
</dbReference>
<dbReference type="PDB" id="1SBR">
    <property type="method" value="X-ray"/>
    <property type="resolution" value="2.30 A"/>
    <property type="chains" value="A/B=1-200"/>
</dbReference>
<dbReference type="PDBsum" id="1S7H"/>
<dbReference type="PDBsum" id="1S99"/>
<dbReference type="PDBsum" id="1SBR"/>
<dbReference type="SMR" id="O34911"/>
<dbReference type="FunCoup" id="O34911">
    <property type="interactions" value="8"/>
</dbReference>
<dbReference type="STRING" id="224308.BSU13240"/>
<dbReference type="PaxDb" id="224308-BSU13240"/>
<dbReference type="EnsemblBacteria" id="CAB13181">
    <property type="protein sequence ID" value="CAB13181"/>
    <property type="gene ID" value="BSU_13240"/>
</dbReference>
<dbReference type="GeneID" id="936465"/>
<dbReference type="KEGG" id="bsu:BSU13240"/>
<dbReference type="PATRIC" id="fig|224308.179.peg.1438"/>
<dbReference type="eggNOG" id="ENOG502ZBT9">
    <property type="taxonomic scope" value="Bacteria"/>
</dbReference>
<dbReference type="InParanoid" id="O34911"/>
<dbReference type="OrthoDB" id="7767286at2"/>
<dbReference type="BioCyc" id="BSUB:BSU13240-MONOMER"/>
<dbReference type="EvolutionaryTrace" id="O34911"/>
<dbReference type="PRO" id="PR:O34911"/>
<dbReference type="Proteomes" id="UP000001570">
    <property type="component" value="Chromosome"/>
</dbReference>
<dbReference type="GO" id="GO:0030975">
    <property type="term" value="F:thiamine binding"/>
    <property type="evidence" value="ECO:0007669"/>
    <property type="project" value="InterPro"/>
</dbReference>
<dbReference type="Gene3D" id="3.30.70.930">
    <property type="match status" value="2"/>
</dbReference>
<dbReference type="InterPro" id="IPR015835">
    <property type="entry name" value="HMP/thiamine-bd"/>
</dbReference>
<dbReference type="InterPro" id="IPR029756">
    <property type="entry name" value="MTH1187/YkoF-like"/>
</dbReference>
<dbReference type="InterPro" id="IPR011522">
    <property type="entry name" value="Thiamin/HMP-bd_put_YkoF"/>
</dbReference>
<dbReference type="Pfam" id="PF07615">
    <property type="entry name" value="Ykof"/>
    <property type="match status" value="2"/>
</dbReference>
<dbReference type="PIRSF" id="PIRSF021331">
    <property type="entry name" value="YkoF"/>
    <property type="match status" value="1"/>
</dbReference>
<dbReference type="SUPFAM" id="SSF89957">
    <property type="entry name" value="MTH1187/YkoF-like"/>
    <property type="match status" value="1"/>
</dbReference>
<evidence type="ECO:0000269" key="1">
    <source>
    </source>
</evidence>
<evidence type="ECO:0000269" key="2">
    <source>
    </source>
</evidence>
<evidence type="ECO:0000269" key="3">
    <source>
    </source>
</evidence>
<evidence type="ECO:0000305" key="4">
    <source>
    </source>
</evidence>
<evidence type="ECO:0000305" key="5">
    <source ref="6"/>
</evidence>
<evidence type="ECO:0007829" key="6">
    <source>
        <dbReference type="PDB" id="1S99"/>
    </source>
</evidence>
<accession>O34911</accession>
<accession>Q796L7</accession>
<proteinExistence type="evidence at protein level"/>
<keyword id="KW-0002">3D-structure</keyword>
<keyword id="KW-1185">Reference proteome</keyword>
<keyword id="KW-0813">Transport</keyword>
<organism>
    <name type="scientific">Bacillus subtilis (strain 168)</name>
    <dbReference type="NCBI Taxonomy" id="224308"/>
    <lineage>
        <taxon>Bacteria</taxon>
        <taxon>Bacillati</taxon>
        <taxon>Bacillota</taxon>
        <taxon>Bacilli</taxon>
        <taxon>Bacillales</taxon>
        <taxon>Bacillaceae</taxon>
        <taxon>Bacillus</taxon>
    </lineage>
</organism>
<reference key="1">
    <citation type="submission" date="1997-11" db="EMBL/GenBank/DDBJ databases">
        <title>Sequence of the Bacillus subtilis genome between xlyA and ykoR.</title>
        <authorList>
            <person name="Devine K.M."/>
        </authorList>
    </citation>
    <scope>NUCLEOTIDE SEQUENCE [GENOMIC DNA]</scope>
    <source>
        <strain>168</strain>
    </source>
</reference>
<reference key="2">
    <citation type="journal article" date="1997" name="Nature">
        <title>The complete genome sequence of the Gram-positive bacterium Bacillus subtilis.</title>
        <authorList>
            <person name="Kunst F."/>
            <person name="Ogasawara N."/>
            <person name="Moszer I."/>
            <person name="Albertini A.M."/>
            <person name="Alloni G."/>
            <person name="Azevedo V."/>
            <person name="Bertero M.G."/>
            <person name="Bessieres P."/>
            <person name="Bolotin A."/>
            <person name="Borchert S."/>
            <person name="Borriss R."/>
            <person name="Boursier L."/>
            <person name="Brans A."/>
            <person name="Braun M."/>
            <person name="Brignell S.C."/>
            <person name="Bron S."/>
            <person name="Brouillet S."/>
            <person name="Bruschi C.V."/>
            <person name="Caldwell B."/>
            <person name="Capuano V."/>
            <person name="Carter N.M."/>
            <person name="Choi S.-K."/>
            <person name="Codani J.-J."/>
            <person name="Connerton I.F."/>
            <person name="Cummings N.J."/>
            <person name="Daniel R.A."/>
            <person name="Denizot F."/>
            <person name="Devine K.M."/>
            <person name="Duesterhoeft A."/>
            <person name="Ehrlich S.D."/>
            <person name="Emmerson P.T."/>
            <person name="Entian K.-D."/>
            <person name="Errington J."/>
            <person name="Fabret C."/>
            <person name="Ferrari E."/>
            <person name="Foulger D."/>
            <person name="Fritz C."/>
            <person name="Fujita M."/>
            <person name="Fujita Y."/>
            <person name="Fuma S."/>
            <person name="Galizzi A."/>
            <person name="Galleron N."/>
            <person name="Ghim S.-Y."/>
            <person name="Glaser P."/>
            <person name="Goffeau A."/>
            <person name="Golightly E.J."/>
            <person name="Grandi G."/>
            <person name="Guiseppi G."/>
            <person name="Guy B.J."/>
            <person name="Haga K."/>
            <person name="Haiech J."/>
            <person name="Harwood C.R."/>
            <person name="Henaut A."/>
            <person name="Hilbert H."/>
            <person name="Holsappel S."/>
            <person name="Hosono S."/>
            <person name="Hullo M.-F."/>
            <person name="Itaya M."/>
            <person name="Jones L.-M."/>
            <person name="Joris B."/>
            <person name="Karamata D."/>
            <person name="Kasahara Y."/>
            <person name="Klaerr-Blanchard M."/>
            <person name="Klein C."/>
            <person name="Kobayashi Y."/>
            <person name="Koetter P."/>
            <person name="Koningstein G."/>
            <person name="Krogh S."/>
            <person name="Kumano M."/>
            <person name="Kurita K."/>
            <person name="Lapidus A."/>
            <person name="Lardinois S."/>
            <person name="Lauber J."/>
            <person name="Lazarevic V."/>
            <person name="Lee S.-M."/>
            <person name="Levine A."/>
            <person name="Liu H."/>
            <person name="Masuda S."/>
            <person name="Mauel C."/>
            <person name="Medigue C."/>
            <person name="Medina N."/>
            <person name="Mellado R.P."/>
            <person name="Mizuno M."/>
            <person name="Moestl D."/>
            <person name="Nakai S."/>
            <person name="Noback M."/>
            <person name="Noone D."/>
            <person name="O'Reilly M."/>
            <person name="Ogawa K."/>
            <person name="Ogiwara A."/>
            <person name="Oudega B."/>
            <person name="Park S.-H."/>
            <person name="Parro V."/>
            <person name="Pohl T.M."/>
            <person name="Portetelle D."/>
            <person name="Porwollik S."/>
            <person name="Prescott A.M."/>
            <person name="Presecan E."/>
            <person name="Pujic P."/>
            <person name="Purnelle B."/>
            <person name="Rapoport G."/>
            <person name="Rey M."/>
            <person name="Reynolds S."/>
            <person name="Rieger M."/>
            <person name="Rivolta C."/>
            <person name="Rocha E."/>
            <person name="Roche B."/>
            <person name="Rose M."/>
            <person name="Sadaie Y."/>
            <person name="Sato T."/>
            <person name="Scanlan E."/>
            <person name="Schleich S."/>
            <person name="Schroeter R."/>
            <person name="Scoffone F."/>
            <person name="Sekiguchi J."/>
            <person name="Sekowska A."/>
            <person name="Seror S.J."/>
            <person name="Serror P."/>
            <person name="Shin B.-S."/>
            <person name="Soldo B."/>
            <person name="Sorokin A."/>
            <person name="Tacconi E."/>
            <person name="Takagi T."/>
            <person name="Takahashi H."/>
            <person name="Takemaru K."/>
            <person name="Takeuchi M."/>
            <person name="Tamakoshi A."/>
            <person name="Tanaka T."/>
            <person name="Terpstra P."/>
            <person name="Tognoni A."/>
            <person name="Tosato V."/>
            <person name="Uchiyama S."/>
            <person name="Vandenbol M."/>
            <person name="Vannier F."/>
            <person name="Vassarotti A."/>
            <person name="Viari A."/>
            <person name="Wambutt R."/>
            <person name="Wedler E."/>
            <person name="Wedler H."/>
            <person name="Weitzenegger T."/>
            <person name="Winters P."/>
            <person name="Wipat A."/>
            <person name="Yamamoto H."/>
            <person name="Yamane K."/>
            <person name="Yasumoto K."/>
            <person name="Yata K."/>
            <person name="Yoshida K."/>
            <person name="Yoshikawa H.-F."/>
            <person name="Zumstein E."/>
            <person name="Yoshikawa H."/>
            <person name="Danchin A."/>
        </authorList>
    </citation>
    <scope>NUCLEOTIDE SEQUENCE [LARGE SCALE GENOMIC DNA]</scope>
    <source>
        <strain>168</strain>
    </source>
</reference>
<reference key="3">
    <citation type="journal article" date="2002" name="J. Biol. Chem.">
        <title>Comparative genomics of thiamin biosynthesis in procaryotes. New genes and regulatory mechanisms.</title>
        <authorList>
            <person name="Rodionov D.A."/>
            <person name="Vitreschak A.G."/>
            <person name="Mironov A.A."/>
            <person name="Gelfand M.S."/>
        </authorList>
    </citation>
    <scope>FUNCTION IN HMP TRANSPORT</scope>
</reference>
<reference key="4">
    <citation type="journal article" date="2005" name="J. Bacteriol.">
        <title>Isolation and characterization of new thiamine-deregulated mutants of Bacillus subtilis.</title>
        <authorList>
            <person name="Schyns G."/>
            <person name="Potot S."/>
            <person name="Geng Y."/>
            <person name="Barbosa T.M."/>
            <person name="Henriques A."/>
            <person name="Perkins J.B."/>
        </authorList>
    </citation>
    <scope>FUNCTION IN HMP/THIAMINE TRANSPORT</scope>
    <source>
        <strain>168 / PY79</strain>
    </source>
</reference>
<reference key="5">
    <citation type="journal article" date="2004" name="J. Mol. Biol.">
        <title>The structure and ligand binding properties of the B. subtilis YkoF gene product, a member of a novel family of thiamin/HMP-binding proteins.</title>
        <authorList>
            <person name="Devedjiev Y."/>
            <person name="Surendranath Y."/>
            <person name="Derewenda U."/>
            <person name="Gabrys A."/>
            <person name="Cooper D.R."/>
            <person name="Zhang R.G."/>
            <person name="Lezondra L."/>
            <person name="Joachimiak A."/>
            <person name="Derewenda Z.S."/>
        </authorList>
    </citation>
    <scope>X-RAY CRYSTALLOGRAPHY (1.65 ANGSTROMS) IN COMPLEX WITH THIAMINE</scope>
    <scope>SUBUNIT</scope>
</reference>
<reference key="6">
    <citation type="submission" date="2005-01" db="PDB data bank">
        <title>2.2-A crystal structure of protein ykoF from Bacillus subtilis.</title>
        <authorList>
            <consortium name="Midwest center for structural genomics (MCSG)"/>
        </authorList>
    </citation>
    <scope>X-RAY CRYSTALLOGRAPHY (2.2 ANGSTROMS)</scope>
    <scope>SUBUNIT</scope>
</reference>
<sequence length="200" mass="22024">MEHICGTSRIAGFRFSLYPMTDDFISVIKSALKKTDTSKVWTKTDHISTVLRGSIDHVFDAAKAIYLHAANSEQHIVMNGTFSIGCPGDTQGDTYLSKGDKRVNEDAVRGLKAEAPCQFALYPMNEPDYMGLIMEAVDIAKAQGTFVQGVHYASELDGDAHDVFSTLEAVFRMAEQQTNHITMTVNLSANSPSRKNRKQG</sequence>
<gene>
    <name type="primary">ykoF</name>
    <name type="ordered locus">BSU13240</name>
</gene>